<evidence type="ECO:0000255" key="1"/>
<evidence type="ECO:0000256" key="2">
    <source>
        <dbReference type="SAM" id="MobiDB-lite"/>
    </source>
</evidence>
<evidence type="ECO:0000305" key="3"/>
<proteinExistence type="evidence at transcript level"/>
<organism>
    <name type="scientific">Bos taurus</name>
    <name type="common">Bovine</name>
    <dbReference type="NCBI Taxonomy" id="9913"/>
    <lineage>
        <taxon>Eukaryota</taxon>
        <taxon>Metazoa</taxon>
        <taxon>Chordata</taxon>
        <taxon>Craniata</taxon>
        <taxon>Vertebrata</taxon>
        <taxon>Euteleostomi</taxon>
        <taxon>Mammalia</taxon>
        <taxon>Eutheria</taxon>
        <taxon>Laurasiatheria</taxon>
        <taxon>Artiodactyla</taxon>
        <taxon>Ruminantia</taxon>
        <taxon>Pecora</taxon>
        <taxon>Bovidae</taxon>
        <taxon>Bovinae</taxon>
        <taxon>Bos</taxon>
    </lineage>
</organism>
<dbReference type="EMBL" id="BT026542">
    <property type="protein sequence ID" value="ABH06329.1"/>
    <property type="molecule type" value="mRNA"/>
</dbReference>
<dbReference type="EMBL" id="BC123653">
    <property type="protein sequence ID" value="AAI23654.1"/>
    <property type="molecule type" value="mRNA"/>
</dbReference>
<dbReference type="RefSeq" id="NP_001069962.1">
    <property type="nucleotide sequence ID" value="NM_001076494.2"/>
</dbReference>
<dbReference type="RefSeq" id="XP_010806006.1">
    <property type="nucleotide sequence ID" value="XM_010807704.4"/>
</dbReference>
<dbReference type="SMR" id="Q0V7M8"/>
<dbReference type="FunCoup" id="Q0V7M8">
    <property type="interactions" value="240"/>
</dbReference>
<dbReference type="STRING" id="9913.ENSBTAP00000025383"/>
<dbReference type="PaxDb" id="9913-ENSBTAP00000025383"/>
<dbReference type="Ensembl" id="ENSBTAT00000025383.4">
    <property type="protein sequence ID" value="ENSBTAP00000025383.3"/>
    <property type="gene ID" value="ENSBTAG00000019066.5"/>
</dbReference>
<dbReference type="GeneID" id="618107"/>
<dbReference type="KEGG" id="bta:618107"/>
<dbReference type="CTD" id="83648"/>
<dbReference type="VEuPathDB" id="HostDB:ENSBTAG00000019066"/>
<dbReference type="VGNC" id="VGNC:28750">
    <property type="gene designation" value="FAM167A"/>
</dbReference>
<dbReference type="eggNOG" id="ENOG502RY4P">
    <property type="taxonomic scope" value="Eukaryota"/>
</dbReference>
<dbReference type="GeneTree" id="ENSGT00940000159097"/>
<dbReference type="HOGENOM" id="CLU_111170_0_0_1"/>
<dbReference type="InParanoid" id="Q0V7M8"/>
<dbReference type="OMA" id="PQIHIEE"/>
<dbReference type="OrthoDB" id="5965452at2759"/>
<dbReference type="TreeFam" id="TF330468"/>
<dbReference type="Proteomes" id="UP000009136">
    <property type="component" value="Chromosome 8"/>
</dbReference>
<dbReference type="Bgee" id="ENSBTAG00000019066">
    <property type="expression patterns" value="Expressed in corpus epididymis and 75 other cell types or tissues"/>
</dbReference>
<dbReference type="InterPro" id="IPR024280">
    <property type="entry name" value="FAM167"/>
</dbReference>
<dbReference type="InterPro" id="IPR051771">
    <property type="entry name" value="FAM167_domain"/>
</dbReference>
<dbReference type="PANTHER" id="PTHR32289">
    <property type="entry name" value="PROTEIN FAM167A"/>
    <property type="match status" value="1"/>
</dbReference>
<dbReference type="PANTHER" id="PTHR32289:SF3">
    <property type="entry name" value="PROTEIN FAM167A"/>
    <property type="match status" value="1"/>
</dbReference>
<dbReference type="Pfam" id="PF11652">
    <property type="entry name" value="FAM167"/>
    <property type="match status" value="1"/>
</dbReference>
<reference key="1">
    <citation type="journal article" date="2005" name="BMC Genomics">
        <title>Characterization of 954 bovine full-CDS cDNA sequences.</title>
        <authorList>
            <person name="Harhay G.P."/>
            <person name="Sonstegard T.S."/>
            <person name="Keele J.W."/>
            <person name="Heaton M.P."/>
            <person name="Clawson M.L."/>
            <person name="Snelling W.M."/>
            <person name="Wiedmann R.T."/>
            <person name="Van Tassell C.P."/>
            <person name="Smith T.P.L."/>
        </authorList>
    </citation>
    <scope>NUCLEOTIDE SEQUENCE [LARGE SCALE MRNA]</scope>
</reference>
<reference key="2">
    <citation type="submission" date="2006-09" db="EMBL/GenBank/DDBJ databases">
        <authorList>
            <consortium name="NIH - Mammalian Gene Collection (MGC) project"/>
        </authorList>
    </citation>
    <scope>NUCLEOTIDE SEQUENCE [LARGE SCALE MRNA]</scope>
    <source>
        <strain>Hereford</strain>
        <tissue>Thalamus</tissue>
    </source>
</reference>
<sequence length="211" mass="24055">MSVPQIQVEEVAGGEEGPAGTTPPPDDHLRSLKALTEKLRLETRRPSYLEWQARLEEQTWPFPRPAAEPRGSGEEEPSLLRTRALRPHPPPNGRANQDDGHPPTGKLEGFESIDEAIAWLRKELMEMRLQDQQLARQLMRLRSDIHKLKIEQTCDLHRRMLNDATYELEERDELSDLFCDAPLASSFSLSAPLKLIGVTKMNINSRRFSLC</sequence>
<feature type="chain" id="PRO_0000253037" description="Protein FAM167A">
    <location>
        <begin position="1"/>
        <end position="211"/>
    </location>
</feature>
<feature type="region of interest" description="Disordered" evidence="2">
    <location>
        <begin position="1"/>
        <end position="30"/>
    </location>
</feature>
<feature type="region of interest" description="Disordered" evidence="2">
    <location>
        <begin position="56"/>
        <end position="108"/>
    </location>
</feature>
<feature type="coiled-coil region" evidence="1">
    <location>
        <begin position="120"/>
        <end position="153"/>
    </location>
</feature>
<accession>Q0V7M8</accession>
<accession>A4FV25</accession>
<name>F167A_BOVIN</name>
<protein>
    <recommendedName>
        <fullName>Protein FAM167A</fullName>
    </recommendedName>
</protein>
<comment type="similarity">
    <text evidence="3">Belongs to the FAM167 (SEC) family.</text>
</comment>
<keyword id="KW-0175">Coiled coil</keyword>
<keyword id="KW-1185">Reference proteome</keyword>
<gene>
    <name type="primary">FAM167A</name>
</gene>